<protein>
    <recommendedName>
        <fullName evidence="6">telomere-associated protein 1</fullName>
    </recommendedName>
</protein>
<sequence>MSHFGDHVGIDPAIMKQYSEHHNGSHDNDDKDKEDKEKQNTEAVAAAAVQLDASLLASGILDDFEKAKKEEEEANGNNNASNDQQNASDRHVGDMLEQHSQQHQQSQEHDTSYINTYIEDKVPLTSVLIPGDRRVSDREASDRIAATTRRVRLRWTQEETADLMEGCKVHGVGNWKKILTDPRFRFNNRTAVDLKDRFRTCFPEDYRRLYPNARSRKFGKKTNVMAVNDDLVKVNRKERRVFTPEEDERLLNGFMKHGPSWSNIQRDNELGLFERRSTDLRDRFRNAFPLEYAAAGFKARGPKRRPVVEATHGNTLQTIFSASDGSEMSPRKYHRVQEQMDRQPVMRVHPQAPMDQGVDRDHMTQQFTQELQPQAHSRKQQGGDGLKEEVFAAAQNQSYNNYYYQK</sequence>
<proteinExistence type="evidence at protein level"/>
<feature type="chain" id="PRO_0000433237" description="telomere-associated protein 1">
    <location>
        <begin position="1"/>
        <end position="406"/>
    </location>
</feature>
<feature type="domain" description="HTH myb-type" evidence="2">
    <location>
        <begin position="147"/>
        <end position="206"/>
    </location>
</feature>
<feature type="domain" description="Myb-like" evidence="1">
    <location>
        <begin position="234"/>
        <end position="288"/>
    </location>
</feature>
<feature type="DNA-binding region" description="H-T-H motif" evidence="2">
    <location>
        <begin position="175"/>
        <end position="202"/>
    </location>
</feature>
<feature type="region of interest" description="Disordered" evidence="3">
    <location>
        <begin position="20"/>
        <end position="46"/>
    </location>
</feature>
<feature type="region of interest" description="Disordered" evidence="3">
    <location>
        <begin position="368"/>
        <end position="389"/>
    </location>
</feature>
<feature type="compositionally biased region" description="Basic and acidic residues" evidence="3">
    <location>
        <begin position="20"/>
        <end position="40"/>
    </location>
</feature>
<accession>Q6C9I6</accession>
<keyword id="KW-0158">Chromosome</keyword>
<keyword id="KW-0238">DNA-binding</keyword>
<keyword id="KW-0539">Nucleus</keyword>
<keyword id="KW-1185">Reference proteome</keyword>
<keyword id="KW-0779">Telomere</keyword>
<organism>
    <name type="scientific">Yarrowia lipolytica (strain CLIB 122 / E 150)</name>
    <name type="common">Yeast</name>
    <name type="synonym">Candida lipolytica</name>
    <dbReference type="NCBI Taxonomy" id="284591"/>
    <lineage>
        <taxon>Eukaryota</taxon>
        <taxon>Fungi</taxon>
        <taxon>Dikarya</taxon>
        <taxon>Ascomycota</taxon>
        <taxon>Saccharomycotina</taxon>
        <taxon>Dipodascomycetes</taxon>
        <taxon>Dipodascales</taxon>
        <taxon>Dipodascales incertae sedis</taxon>
        <taxon>Yarrowia</taxon>
    </lineage>
</organism>
<name>TAY1_YARLI</name>
<reference key="1">
    <citation type="journal article" date="2004" name="Nature">
        <title>Genome evolution in yeasts.</title>
        <authorList>
            <person name="Dujon B."/>
            <person name="Sherman D."/>
            <person name="Fischer G."/>
            <person name="Durrens P."/>
            <person name="Casaregola S."/>
            <person name="Lafontaine I."/>
            <person name="de Montigny J."/>
            <person name="Marck C."/>
            <person name="Neuveglise C."/>
            <person name="Talla E."/>
            <person name="Goffard N."/>
            <person name="Frangeul L."/>
            <person name="Aigle M."/>
            <person name="Anthouard V."/>
            <person name="Babour A."/>
            <person name="Barbe V."/>
            <person name="Barnay S."/>
            <person name="Blanchin S."/>
            <person name="Beckerich J.-M."/>
            <person name="Beyne E."/>
            <person name="Bleykasten C."/>
            <person name="Boisrame A."/>
            <person name="Boyer J."/>
            <person name="Cattolico L."/>
            <person name="Confanioleri F."/>
            <person name="de Daruvar A."/>
            <person name="Despons L."/>
            <person name="Fabre E."/>
            <person name="Fairhead C."/>
            <person name="Ferry-Dumazet H."/>
            <person name="Groppi A."/>
            <person name="Hantraye F."/>
            <person name="Hennequin C."/>
            <person name="Jauniaux N."/>
            <person name="Joyet P."/>
            <person name="Kachouri R."/>
            <person name="Kerrest A."/>
            <person name="Koszul R."/>
            <person name="Lemaire M."/>
            <person name="Lesur I."/>
            <person name="Ma L."/>
            <person name="Muller H."/>
            <person name="Nicaud J.-M."/>
            <person name="Nikolski M."/>
            <person name="Oztas S."/>
            <person name="Ozier-Kalogeropoulos O."/>
            <person name="Pellenz S."/>
            <person name="Potier S."/>
            <person name="Richard G.-F."/>
            <person name="Straub M.-L."/>
            <person name="Suleau A."/>
            <person name="Swennen D."/>
            <person name="Tekaia F."/>
            <person name="Wesolowski-Louvel M."/>
            <person name="Westhof E."/>
            <person name="Wirth B."/>
            <person name="Zeniou-Meyer M."/>
            <person name="Zivanovic Y."/>
            <person name="Bolotin-Fukuhara M."/>
            <person name="Thierry A."/>
            <person name="Bouchier C."/>
            <person name="Caudron B."/>
            <person name="Scarpelli C."/>
            <person name="Gaillardin C."/>
            <person name="Weissenbach J."/>
            <person name="Wincker P."/>
            <person name="Souciet J.-L."/>
        </authorList>
    </citation>
    <scope>NUCLEOTIDE SEQUENCE [LARGE SCALE GENOMIC DNA]</scope>
    <source>
        <strain>CLIB 122 / E 150</strain>
    </source>
</reference>
<reference key="2">
    <citation type="journal article" date="2010" name="J. Biol. Chem.">
        <title>Tay1 protein, a novel telomere binding factor from Yarrowia lipolytica.</title>
        <authorList>
            <person name="Kramara J."/>
            <person name="Willcox S."/>
            <person name="Gunisova S."/>
            <person name="Kinsky S."/>
            <person name="Nosek J."/>
            <person name="Griffith J.D."/>
            <person name="Tomaska L."/>
        </authorList>
    </citation>
    <scope>FUNCTION</scope>
    <scope>TELOMERE-BINDING</scope>
    <scope>SUBCELLULAR LOCATION</scope>
</reference>
<reference key="3">
    <citation type="journal article" date="2012" name="J. Biol. Chem.">
        <title>Synergism of the two Myb domains of Tay1 protein results in high affinity binding to telomeres.</title>
        <authorList>
            <person name="Visacka K."/>
            <person name="Hofr C."/>
            <person name="Willcox S."/>
            <person name="Necasova I."/>
            <person name="Pavlouskova J."/>
            <person name="Sepsiova R."/>
            <person name="Wimmerova M."/>
            <person name="Simonicova L."/>
            <person name="Nosek J."/>
            <person name="Fajkus J."/>
            <person name="Griffith J.D."/>
            <person name="Tomaska L."/>
        </authorList>
    </citation>
    <scope>FUNCTION</scope>
    <scope>DOMAIN</scope>
    <scope>TELOMERE-BINDING</scope>
    <scope>SUBCELLULAR LOCATION</scope>
</reference>
<comment type="function">
    <text evidence="4 5">Telomere-binding protein that mediates telomere clustering by promoting formation of head-to-head dimers of DNA molecules through the telomeric tracts. Binds specifically 5'-TTAGTCAGGG-3' repeats in subtelomeric regions.</text>
</comment>
<comment type="subcellular location">
    <subcellularLocation>
        <location evidence="2">Nucleus</location>
    </subcellularLocation>
    <subcellularLocation>
        <location evidence="4 5">Chromosome</location>
        <location evidence="4 5">Telomere</location>
    </subcellularLocation>
</comment>
<comment type="domain">
    <text evidence="5">The presence of both Myb domains is required for high affinity telomeric DNA-binding.</text>
</comment>
<gene>
    <name evidence="6" type="primary">TAY1</name>
    <name type="ordered locus">YALI0D10923g</name>
</gene>
<evidence type="ECO:0000255" key="1">
    <source>
        <dbReference type="PROSITE-ProRule" id="PRU00133"/>
    </source>
</evidence>
<evidence type="ECO:0000255" key="2">
    <source>
        <dbReference type="PROSITE-ProRule" id="PRU00625"/>
    </source>
</evidence>
<evidence type="ECO:0000256" key="3">
    <source>
        <dbReference type="SAM" id="MobiDB-lite"/>
    </source>
</evidence>
<evidence type="ECO:0000269" key="4">
    <source>
    </source>
</evidence>
<evidence type="ECO:0000269" key="5">
    <source>
    </source>
</evidence>
<evidence type="ECO:0000303" key="6">
    <source>
    </source>
</evidence>
<dbReference type="EMBL" id="CR382130">
    <property type="protein sequence ID" value="CAG80864.1"/>
    <property type="molecule type" value="Genomic_DNA"/>
</dbReference>
<dbReference type="RefSeq" id="XP_502676.1">
    <property type="nucleotide sequence ID" value="XM_502676.1"/>
</dbReference>
<dbReference type="STRING" id="284591.Q6C9I6"/>
<dbReference type="EnsemblFungi" id="CAG80864">
    <property type="protein sequence ID" value="CAG80864"/>
    <property type="gene ID" value="YALI0_D10923g"/>
</dbReference>
<dbReference type="KEGG" id="yli:2910717"/>
<dbReference type="VEuPathDB" id="FungiDB:YALI0_D10923g"/>
<dbReference type="HOGENOM" id="CLU_678276_0_0_1"/>
<dbReference type="InParanoid" id="Q6C9I6"/>
<dbReference type="OrthoDB" id="117193at4891"/>
<dbReference type="Proteomes" id="UP000001300">
    <property type="component" value="Chromosome D"/>
</dbReference>
<dbReference type="GO" id="GO:0000781">
    <property type="term" value="C:chromosome, telomeric region"/>
    <property type="evidence" value="ECO:0007669"/>
    <property type="project" value="UniProtKB-SubCell"/>
</dbReference>
<dbReference type="GO" id="GO:0005634">
    <property type="term" value="C:nucleus"/>
    <property type="evidence" value="ECO:0007669"/>
    <property type="project" value="UniProtKB-SubCell"/>
</dbReference>
<dbReference type="GO" id="GO:0003677">
    <property type="term" value="F:DNA binding"/>
    <property type="evidence" value="ECO:0007669"/>
    <property type="project" value="UniProtKB-KW"/>
</dbReference>
<dbReference type="CDD" id="cd11660">
    <property type="entry name" value="SANT_TRF"/>
    <property type="match status" value="2"/>
</dbReference>
<dbReference type="Gene3D" id="1.10.10.60">
    <property type="entry name" value="Homeodomain-like"/>
    <property type="match status" value="2"/>
</dbReference>
<dbReference type="InterPro" id="IPR009057">
    <property type="entry name" value="Homeodomain-like_sf"/>
</dbReference>
<dbReference type="InterPro" id="IPR017930">
    <property type="entry name" value="Myb_dom"/>
</dbReference>
<dbReference type="InterPro" id="IPR001005">
    <property type="entry name" value="SANT/Myb"/>
</dbReference>
<dbReference type="InterPro" id="IPR052450">
    <property type="entry name" value="TRBD-Containing_Protein"/>
</dbReference>
<dbReference type="PANTHER" id="PTHR46734:SF1">
    <property type="entry name" value="TELOMERIC REPEAT-BINDING FACTOR 1"/>
    <property type="match status" value="1"/>
</dbReference>
<dbReference type="PANTHER" id="PTHR46734">
    <property type="entry name" value="TELOMERIC REPEAT-BINDING FACTOR 1 TERF1"/>
    <property type="match status" value="1"/>
</dbReference>
<dbReference type="Pfam" id="PF00249">
    <property type="entry name" value="Myb_DNA-binding"/>
    <property type="match status" value="2"/>
</dbReference>
<dbReference type="SMART" id="SM00717">
    <property type="entry name" value="SANT"/>
    <property type="match status" value="2"/>
</dbReference>
<dbReference type="SUPFAM" id="SSF46689">
    <property type="entry name" value="Homeodomain-like"/>
    <property type="match status" value="2"/>
</dbReference>
<dbReference type="PROSITE" id="PS51294">
    <property type="entry name" value="HTH_MYB"/>
    <property type="match status" value="1"/>
</dbReference>
<dbReference type="PROSITE" id="PS50090">
    <property type="entry name" value="MYB_LIKE"/>
    <property type="match status" value="1"/>
</dbReference>